<evidence type="ECO:0000250" key="1"/>
<evidence type="ECO:0000305" key="2"/>
<organism>
    <name type="scientific">Homo sapiens</name>
    <name type="common">Human</name>
    <dbReference type="NCBI Taxonomy" id="9606"/>
    <lineage>
        <taxon>Eukaryota</taxon>
        <taxon>Metazoa</taxon>
        <taxon>Chordata</taxon>
        <taxon>Craniata</taxon>
        <taxon>Vertebrata</taxon>
        <taxon>Euteleostomi</taxon>
        <taxon>Mammalia</taxon>
        <taxon>Eutheria</taxon>
        <taxon>Euarchontoglires</taxon>
        <taxon>Primates</taxon>
        <taxon>Haplorrhini</taxon>
        <taxon>Catarrhini</taxon>
        <taxon>Hominidae</taxon>
        <taxon>Homo</taxon>
    </lineage>
</organism>
<sequence>MALCLKQVFAKDKTFRPRKRFEPGTQRFELYKKAQASLKSGLDLRSVVRLPPGENIDDWIAVHVVDFFNRINLIYGTMAERCSETSCPVMAGGPRYEYRWQDERQYRRPAKLSAPRYMALLMDWIEGLINDEEVFPTRVGVPFPKNFQQVCTKILTRLFRVFVHVYIHHFDSILSMGAEAHVNTCYKHFYYFIREFSLVDQRELEPLREMTERICH</sequence>
<reference key="1">
    <citation type="submission" date="2003-08" db="EMBL/GenBank/DDBJ databases">
        <title>Characterization of the human Mob-1 like proteins.</title>
        <authorList>
            <person name="Florindo C.S."/>
            <person name="Tavares A.A."/>
        </authorList>
    </citation>
    <scope>NUCLEOTIDE SEQUENCE [MRNA]</scope>
</reference>
<reference key="2">
    <citation type="submission" date="2002-07" db="EMBL/GenBank/DDBJ databases">
        <title>The nucleotide sequence of a long cDNA clone isolated from human spleen.</title>
        <authorList>
            <person name="Jikuya H."/>
            <person name="Takano J."/>
            <person name="Kikuno R."/>
            <person name="Nagase T."/>
            <person name="Ohara O."/>
        </authorList>
    </citation>
    <scope>NUCLEOTIDE SEQUENCE [LARGE SCALE MRNA]</scope>
    <source>
        <tissue>Spleen</tissue>
    </source>
</reference>
<reference key="3">
    <citation type="journal article" date="2006" name="Nature">
        <title>The DNA sequence and biological annotation of human chromosome 1.</title>
        <authorList>
            <person name="Gregory S.G."/>
            <person name="Barlow K.F."/>
            <person name="McLay K.E."/>
            <person name="Kaul R."/>
            <person name="Swarbreck D."/>
            <person name="Dunham A."/>
            <person name="Scott C.E."/>
            <person name="Howe K.L."/>
            <person name="Woodfine K."/>
            <person name="Spencer C.C.A."/>
            <person name="Jones M.C."/>
            <person name="Gillson C."/>
            <person name="Searle S."/>
            <person name="Zhou Y."/>
            <person name="Kokocinski F."/>
            <person name="McDonald L."/>
            <person name="Evans R."/>
            <person name="Phillips K."/>
            <person name="Atkinson A."/>
            <person name="Cooper R."/>
            <person name="Jones C."/>
            <person name="Hall R.E."/>
            <person name="Andrews T.D."/>
            <person name="Lloyd C."/>
            <person name="Ainscough R."/>
            <person name="Almeida J.P."/>
            <person name="Ambrose K.D."/>
            <person name="Anderson F."/>
            <person name="Andrew R.W."/>
            <person name="Ashwell R.I.S."/>
            <person name="Aubin K."/>
            <person name="Babbage A.K."/>
            <person name="Bagguley C.L."/>
            <person name="Bailey J."/>
            <person name="Beasley H."/>
            <person name="Bethel G."/>
            <person name="Bird C.P."/>
            <person name="Bray-Allen S."/>
            <person name="Brown J.Y."/>
            <person name="Brown A.J."/>
            <person name="Buckley D."/>
            <person name="Burton J."/>
            <person name="Bye J."/>
            <person name="Carder C."/>
            <person name="Chapman J.C."/>
            <person name="Clark S.Y."/>
            <person name="Clarke G."/>
            <person name="Clee C."/>
            <person name="Cobley V."/>
            <person name="Collier R.E."/>
            <person name="Corby N."/>
            <person name="Coville G.J."/>
            <person name="Davies J."/>
            <person name="Deadman R."/>
            <person name="Dunn M."/>
            <person name="Earthrowl M."/>
            <person name="Ellington A.G."/>
            <person name="Errington H."/>
            <person name="Frankish A."/>
            <person name="Frankland J."/>
            <person name="French L."/>
            <person name="Garner P."/>
            <person name="Garnett J."/>
            <person name="Gay L."/>
            <person name="Ghori M.R.J."/>
            <person name="Gibson R."/>
            <person name="Gilby L.M."/>
            <person name="Gillett W."/>
            <person name="Glithero R.J."/>
            <person name="Grafham D.V."/>
            <person name="Griffiths C."/>
            <person name="Griffiths-Jones S."/>
            <person name="Grocock R."/>
            <person name="Hammond S."/>
            <person name="Harrison E.S.I."/>
            <person name="Hart E."/>
            <person name="Haugen E."/>
            <person name="Heath P.D."/>
            <person name="Holmes S."/>
            <person name="Holt K."/>
            <person name="Howden P.J."/>
            <person name="Hunt A.R."/>
            <person name="Hunt S.E."/>
            <person name="Hunter G."/>
            <person name="Isherwood J."/>
            <person name="James R."/>
            <person name="Johnson C."/>
            <person name="Johnson D."/>
            <person name="Joy A."/>
            <person name="Kay M."/>
            <person name="Kershaw J.K."/>
            <person name="Kibukawa M."/>
            <person name="Kimberley A.M."/>
            <person name="King A."/>
            <person name="Knights A.J."/>
            <person name="Lad H."/>
            <person name="Laird G."/>
            <person name="Lawlor S."/>
            <person name="Leongamornlert D.A."/>
            <person name="Lloyd D.M."/>
            <person name="Loveland J."/>
            <person name="Lovell J."/>
            <person name="Lush M.J."/>
            <person name="Lyne R."/>
            <person name="Martin S."/>
            <person name="Mashreghi-Mohammadi M."/>
            <person name="Matthews L."/>
            <person name="Matthews N.S.W."/>
            <person name="McLaren S."/>
            <person name="Milne S."/>
            <person name="Mistry S."/>
            <person name="Moore M.J.F."/>
            <person name="Nickerson T."/>
            <person name="O'Dell C.N."/>
            <person name="Oliver K."/>
            <person name="Palmeiri A."/>
            <person name="Palmer S.A."/>
            <person name="Parker A."/>
            <person name="Patel D."/>
            <person name="Pearce A.V."/>
            <person name="Peck A.I."/>
            <person name="Pelan S."/>
            <person name="Phelps K."/>
            <person name="Phillimore B.J."/>
            <person name="Plumb R."/>
            <person name="Rajan J."/>
            <person name="Raymond C."/>
            <person name="Rouse G."/>
            <person name="Saenphimmachak C."/>
            <person name="Sehra H.K."/>
            <person name="Sheridan E."/>
            <person name="Shownkeen R."/>
            <person name="Sims S."/>
            <person name="Skuce C.D."/>
            <person name="Smith M."/>
            <person name="Steward C."/>
            <person name="Subramanian S."/>
            <person name="Sycamore N."/>
            <person name="Tracey A."/>
            <person name="Tromans A."/>
            <person name="Van Helmond Z."/>
            <person name="Wall M."/>
            <person name="Wallis J.M."/>
            <person name="White S."/>
            <person name="Whitehead S.L."/>
            <person name="Wilkinson J.E."/>
            <person name="Willey D.L."/>
            <person name="Williams H."/>
            <person name="Wilming L."/>
            <person name="Wray P.W."/>
            <person name="Wu Z."/>
            <person name="Coulson A."/>
            <person name="Vaudin M."/>
            <person name="Sulston J.E."/>
            <person name="Durbin R.M."/>
            <person name="Hubbard T."/>
            <person name="Wooster R."/>
            <person name="Dunham I."/>
            <person name="Carter N.P."/>
            <person name="McVean G."/>
            <person name="Ross M.T."/>
            <person name="Harrow J."/>
            <person name="Olson M.V."/>
            <person name="Beck S."/>
            <person name="Rogers J."/>
            <person name="Bentley D.R."/>
        </authorList>
    </citation>
    <scope>NUCLEOTIDE SEQUENCE [LARGE SCALE GENOMIC DNA]</scope>
</reference>
<reference key="4">
    <citation type="submission" date="2005-09" db="EMBL/GenBank/DDBJ databases">
        <authorList>
            <person name="Mural R.J."/>
            <person name="Istrail S."/>
            <person name="Sutton G.G."/>
            <person name="Florea L."/>
            <person name="Halpern A.L."/>
            <person name="Mobarry C.M."/>
            <person name="Lippert R."/>
            <person name="Walenz B."/>
            <person name="Shatkay H."/>
            <person name="Dew I."/>
            <person name="Miller J.R."/>
            <person name="Flanigan M.J."/>
            <person name="Edwards N.J."/>
            <person name="Bolanos R."/>
            <person name="Fasulo D."/>
            <person name="Halldorsson B.V."/>
            <person name="Hannenhalli S."/>
            <person name="Turner R."/>
            <person name="Yooseph S."/>
            <person name="Lu F."/>
            <person name="Nusskern D.R."/>
            <person name="Shue B.C."/>
            <person name="Zheng X.H."/>
            <person name="Zhong F."/>
            <person name="Delcher A.L."/>
            <person name="Huson D.H."/>
            <person name="Kravitz S.A."/>
            <person name="Mouchard L."/>
            <person name="Reinert K."/>
            <person name="Remington K.A."/>
            <person name="Clark A.G."/>
            <person name="Waterman M.S."/>
            <person name="Eichler E.E."/>
            <person name="Adams M.D."/>
            <person name="Hunkapiller M.W."/>
            <person name="Myers E.W."/>
            <person name="Venter J.C."/>
        </authorList>
    </citation>
    <scope>NUCLEOTIDE SEQUENCE [LARGE SCALE GENOMIC DNA]</scope>
</reference>
<reference key="5">
    <citation type="journal article" date="2004" name="Genome Res.">
        <title>The status, quality, and expansion of the NIH full-length cDNA project: the Mammalian Gene Collection (MGC).</title>
        <authorList>
            <consortium name="The MGC Project Team"/>
        </authorList>
    </citation>
    <scope>NUCLEOTIDE SEQUENCE [LARGE SCALE MRNA]</scope>
</reference>
<reference key="6">
    <citation type="journal article" date="2004" name="Nat. Genet.">
        <title>Complete sequencing and characterization of 21,243 full-length human cDNAs.</title>
        <authorList>
            <person name="Ota T."/>
            <person name="Suzuki Y."/>
            <person name="Nishikawa T."/>
            <person name="Otsuki T."/>
            <person name="Sugiyama T."/>
            <person name="Irie R."/>
            <person name="Wakamatsu A."/>
            <person name="Hayashi K."/>
            <person name="Sato H."/>
            <person name="Nagai K."/>
            <person name="Kimura K."/>
            <person name="Makita H."/>
            <person name="Sekine M."/>
            <person name="Obayashi M."/>
            <person name="Nishi T."/>
            <person name="Shibahara T."/>
            <person name="Tanaka T."/>
            <person name="Ishii S."/>
            <person name="Yamamoto J."/>
            <person name="Saito K."/>
            <person name="Kawai Y."/>
            <person name="Isono Y."/>
            <person name="Nakamura Y."/>
            <person name="Nagahari K."/>
            <person name="Murakami K."/>
            <person name="Yasuda T."/>
            <person name="Iwayanagi T."/>
            <person name="Wagatsuma M."/>
            <person name="Shiratori A."/>
            <person name="Sudo H."/>
            <person name="Hosoiri T."/>
            <person name="Kaku Y."/>
            <person name="Kodaira H."/>
            <person name="Kondo H."/>
            <person name="Sugawara M."/>
            <person name="Takahashi M."/>
            <person name="Kanda K."/>
            <person name="Yokoi T."/>
            <person name="Furuya T."/>
            <person name="Kikkawa E."/>
            <person name="Omura Y."/>
            <person name="Abe K."/>
            <person name="Kamihara K."/>
            <person name="Katsuta N."/>
            <person name="Sato K."/>
            <person name="Tanikawa M."/>
            <person name="Yamazaki M."/>
            <person name="Ninomiya K."/>
            <person name="Ishibashi T."/>
            <person name="Yamashita H."/>
            <person name="Murakawa K."/>
            <person name="Fujimori K."/>
            <person name="Tanai H."/>
            <person name="Kimata M."/>
            <person name="Watanabe M."/>
            <person name="Hiraoka S."/>
            <person name="Chiba Y."/>
            <person name="Ishida S."/>
            <person name="Ono Y."/>
            <person name="Takiguchi S."/>
            <person name="Watanabe S."/>
            <person name="Yosida M."/>
            <person name="Hotuta T."/>
            <person name="Kusano J."/>
            <person name="Kanehori K."/>
            <person name="Takahashi-Fujii A."/>
            <person name="Hara H."/>
            <person name="Tanase T.-O."/>
            <person name="Nomura Y."/>
            <person name="Togiya S."/>
            <person name="Komai F."/>
            <person name="Hara R."/>
            <person name="Takeuchi K."/>
            <person name="Arita M."/>
            <person name="Imose N."/>
            <person name="Musashino K."/>
            <person name="Yuuki H."/>
            <person name="Oshima A."/>
            <person name="Sasaki N."/>
            <person name="Aotsuka S."/>
            <person name="Yoshikawa Y."/>
            <person name="Matsunawa H."/>
            <person name="Ichihara T."/>
            <person name="Shiohata N."/>
            <person name="Sano S."/>
            <person name="Moriya S."/>
            <person name="Momiyama H."/>
            <person name="Satoh N."/>
            <person name="Takami S."/>
            <person name="Terashima Y."/>
            <person name="Suzuki O."/>
            <person name="Nakagawa S."/>
            <person name="Senoh A."/>
            <person name="Mizoguchi H."/>
            <person name="Goto Y."/>
            <person name="Shimizu F."/>
            <person name="Wakebe H."/>
            <person name="Hishigaki H."/>
            <person name="Watanabe T."/>
            <person name="Sugiyama A."/>
            <person name="Takemoto M."/>
            <person name="Kawakami B."/>
            <person name="Yamazaki M."/>
            <person name="Watanabe K."/>
            <person name="Kumagai A."/>
            <person name="Itakura S."/>
            <person name="Fukuzumi Y."/>
            <person name="Fujimori Y."/>
            <person name="Komiyama M."/>
            <person name="Tashiro H."/>
            <person name="Tanigami A."/>
            <person name="Fujiwara T."/>
            <person name="Ono T."/>
            <person name="Yamada K."/>
            <person name="Fujii Y."/>
            <person name="Ozaki K."/>
            <person name="Hirao M."/>
            <person name="Ohmori Y."/>
            <person name="Kawabata A."/>
            <person name="Hikiji T."/>
            <person name="Kobatake N."/>
            <person name="Inagaki H."/>
            <person name="Ikema Y."/>
            <person name="Okamoto S."/>
            <person name="Okitani R."/>
            <person name="Kawakami T."/>
            <person name="Noguchi S."/>
            <person name="Itoh T."/>
            <person name="Shigeta K."/>
            <person name="Senba T."/>
            <person name="Matsumura K."/>
            <person name="Nakajima Y."/>
            <person name="Mizuno T."/>
            <person name="Morinaga M."/>
            <person name="Sasaki M."/>
            <person name="Togashi T."/>
            <person name="Oyama M."/>
            <person name="Hata H."/>
            <person name="Watanabe M."/>
            <person name="Komatsu T."/>
            <person name="Mizushima-Sugano J."/>
            <person name="Satoh T."/>
            <person name="Shirai Y."/>
            <person name="Takahashi Y."/>
            <person name="Nakagawa K."/>
            <person name="Okumura K."/>
            <person name="Nagase T."/>
            <person name="Nomura N."/>
            <person name="Kikuchi H."/>
            <person name="Masuho Y."/>
            <person name="Yamashita R."/>
            <person name="Nakai K."/>
            <person name="Yada T."/>
            <person name="Nakamura Y."/>
            <person name="Ohara O."/>
            <person name="Isogai T."/>
            <person name="Sugano S."/>
        </authorList>
    </citation>
    <scope>NUCLEOTIDE SEQUENCE [LARGE SCALE MRNA] OF 17-216</scope>
    <source>
        <tissue>Lung</tissue>
    </source>
</reference>
<gene>
    <name type="primary">MOB3C</name>
    <name type="synonym">MOBKL2C</name>
</gene>
<dbReference type="EMBL" id="AJ580637">
    <property type="protein sequence ID" value="CAE45269.1"/>
    <property type="molecule type" value="mRNA"/>
</dbReference>
<dbReference type="EMBL" id="AK090453">
    <property type="protein sequence ID" value="BAC03434.1"/>
    <property type="status" value="ALT_INIT"/>
    <property type="molecule type" value="mRNA"/>
</dbReference>
<dbReference type="EMBL" id="AL136373">
    <property type="status" value="NOT_ANNOTATED_CDS"/>
    <property type="molecule type" value="Genomic_DNA"/>
</dbReference>
<dbReference type="EMBL" id="CH471059">
    <property type="protein sequence ID" value="EAX06899.1"/>
    <property type="molecule type" value="Genomic_DNA"/>
</dbReference>
<dbReference type="EMBL" id="BC121169">
    <property type="protein sequence ID" value="AAI21170.1"/>
    <property type="molecule type" value="mRNA"/>
</dbReference>
<dbReference type="EMBL" id="AK091808">
    <property type="protein sequence ID" value="BAC03752.1"/>
    <property type="status" value="ALT_INIT"/>
    <property type="molecule type" value="mRNA"/>
</dbReference>
<dbReference type="CCDS" id="CCDS540.1"/>
<dbReference type="RefSeq" id="NP_660322.2">
    <property type="nucleotide sequence ID" value="NM_145279.4"/>
</dbReference>
<dbReference type="RefSeq" id="NP_958805.1">
    <property type="nucleotide sequence ID" value="NM_201403.3"/>
</dbReference>
<dbReference type="SMR" id="Q70IA8"/>
<dbReference type="BioGRID" id="127181">
    <property type="interactions" value="368"/>
</dbReference>
<dbReference type="FunCoup" id="Q70IA8">
    <property type="interactions" value="1522"/>
</dbReference>
<dbReference type="IntAct" id="Q70IA8">
    <property type="interactions" value="18"/>
</dbReference>
<dbReference type="STRING" id="9606.ENSP00000271139"/>
<dbReference type="iPTMnet" id="Q70IA8"/>
<dbReference type="PhosphoSitePlus" id="Q70IA8"/>
<dbReference type="BioMuta" id="MOB3C"/>
<dbReference type="DMDM" id="56749259"/>
<dbReference type="MassIVE" id="Q70IA8"/>
<dbReference type="PaxDb" id="9606-ENSP00000271139"/>
<dbReference type="PeptideAtlas" id="Q70IA8"/>
<dbReference type="ProteomicsDB" id="68557"/>
<dbReference type="Antibodypedia" id="32815">
    <property type="antibodies" value="93 antibodies from 21 providers"/>
</dbReference>
<dbReference type="DNASU" id="148932"/>
<dbReference type="Ensembl" id="ENST00000271139.13">
    <property type="protein sequence ID" value="ENSP00000271139.9"/>
    <property type="gene ID" value="ENSG00000142961.16"/>
</dbReference>
<dbReference type="Ensembl" id="ENST00000319928.9">
    <property type="protein sequence ID" value="ENSP00000315113.3"/>
    <property type="gene ID" value="ENSG00000142961.16"/>
</dbReference>
<dbReference type="Ensembl" id="ENST00000371940.1">
    <property type="protein sequence ID" value="ENSP00000361008.2"/>
    <property type="gene ID" value="ENSG00000142961.16"/>
</dbReference>
<dbReference type="GeneID" id="148932"/>
<dbReference type="KEGG" id="hsa:148932"/>
<dbReference type="MANE-Select" id="ENST00000319928.9">
    <property type="protein sequence ID" value="ENSP00000315113.3"/>
    <property type="RefSeq nucleotide sequence ID" value="NM_201403.3"/>
    <property type="RefSeq protein sequence ID" value="NP_958805.1"/>
</dbReference>
<dbReference type="UCSC" id="uc001cqf.4">
    <property type="organism name" value="human"/>
</dbReference>
<dbReference type="AGR" id="HGNC:29800"/>
<dbReference type="CTD" id="148932"/>
<dbReference type="DisGeNET" id="148932"/>
<dbReference type="GeneCards" id="MOB3C"/>
<dbReference type="HGNC" id="HGNC:29800">
    <property type="gene designation" value="MOB3C"/>
</dbReference>
<dbReference type="HPA" id="ENSG00000142961">
    <property type="expression patterns" value="Low tissue specificity"/>
</dbReference>
<dbReference type="MIM" id="620804">
    <property type="type" value="gene"/>
</dbReference>
<dbReference type="neXtProt" id="NX_Q70IA8"/>
<dbReference type="OpenTargets" id="ENSG00000142961"/>
<dbReference type="PharmGKB" id="PA134928770"/>
<dbReference type="VEuPathDB" id="HostDB:ENSG00000142961"/>
<dbReference type="eggNOG" id="KOG1903">
    <property type="taxonomic scope" value="Eukaryota"/>
</dbReference>
<dbReference type="GeneTree" id="ENSGT01120000271863"/>
<dbReference type="HOGENOM" id="CLU_038321_3_0_1"/>
<dbReference type="InParanoid" id="Q70IA8"/>
<dbReference type="OMA" id="AEHCSET"/>
<dbReference type="OrthoDB" id="8170117at2759"/>
<dbReference type="PAN-GO" id="Q70IA8">
    <property type="GO annotations" value="5 GO annotations based on evolutionary models"/>
</dbReference>
<dbReference type="PhylomeDB" id="Q70IA8"/>
<dbReference type="TreeFam" id="TF300789"/>
<dbReference type="PathwayCommons" id="Q70IA8"/>
<dbReference type="SignaLink" id="Q70IA8"/>
<dbReference type="BioGRID-ORCS" id="148932">
    <property type="hits" value="17 hits in 1155 CRISPR screens"/>
</dbReference>
<dbReference type="GenomeRNAi" id="148932"/>
<dbReference type="Pharos" id="Q70IA8">
    <property type="development level" value="Tdark"/>
</dbReference>
<dbReference type="PRO" id="PR:Q70IA8"/>
<dbReference type="Proteomes" id="UP000005640">
    <property type="component" value="Chromosome 1"/>
</dbReference>
<dbReference type="RNAct" id="Q70IA8">
    <property type="molecule type" value="protein"/>
</dbReference>
<dbReference type="Bgee" id="ENSG00000142961">
    <property type="expression patterns" value="Expressed in body of pancreas and 172 other cell types or tissues"/>
</dbReference>
<dbReference type="ExpressionAtlas" id="Q70IA8">
    <property type="expression patterns" value="baseline and differential"/>
</dbReference>
<dbReference type="GO" id="GO:0005737">
    <property type="term" value="C:cytoplasm"/>
    <property type="evidence" value="ECO:0000318"/>
    <property type="project" value="GO_Central"/>
</dbReference>
<dbReference type="GO" id="GO:0005634">
    <property type="term" value="C:nucleus"/>
    <property type="evidence" value="ECO:0000318"/>
    <property type="project" value="GO_Central"/>
</dbReference>
<dbReference type="GO" id="GO:0046872">
    <property type="term" value="F:metal ion binding"/>
    <property type="evidence" value="ECO:0007669"/>
    <property type="project" value="UniProtKB-KW"/>
</dbReference>
<dbReference type="GO" id="GO:0030295">
    <property type="term" value="F:protein kinase activator activity"/>
    <property type="evidence" value="ECO:0000318"/>
    <property type="project" value="GO_Central"/>
</dbReference>
<dbReference type="GO" id="GO:0007165">
    <property type="term" value="P:signal transduction"/>
    <property type="evidence" value="ECO:0000318"/>
    <property type="project" value="GO_Central"/>
</dbReference>
<dbReference type="FunFam" id="1.20.140.30:FF:000001">
    <property type="entry name" value="MOB kinase activator 1A"/>
    <property type="match status" value="1"/>
</dbReference>
<dbReference type="Gene3D" id="1.20.140.30">
    <property type="entry name" value="MOB kinase activator"/>
    <property type="match status" value="1"/>
</dbReference>
<dbReference type="InterPro" id="IPR005301">
    <property type="entry name" value="MOB_kinase_act_fam"/>
</dbReference>
<dbReference type="InterPro" id="IPR036703">
    <property type="entry name" value="MOB_kinase_act_sf"/>
</dbReference>
<dbReference type="PANTHER" id="PTHR22599">
    <property type="entry name" value="MPS ONE BINDER KINASE ACTIVATOR-LIKE MOB"/>
    <property type="match status" value="1"/>
</dbReference>
<dbReference type="Pfam" id="PF03637">
    <property type="entry name" value="Mob1_phocein"/>
    <property type="match status" value="1"/>
</dbReference>
<dbReference type="SMART" id="SM01388">
    <property type="entry name" value="Mob1_phocein"/>
    <property type="match status" value="1"/>
</dbReference>
<dbReference type="SUPFAM" id="SSF101152">
    <property type="entry name" value="Mob1/phocein"/>
    <property type="match status" value="1"/>
</dbReference>
<proteinExistence type="evidence at protein level"/>
<feature type="chain" id="PRO_0000193574" description="MOB kinase activator 3C">
    <location>
        <begin position="1"/>
        <end position="216"/>
    </location>
</feature>
<feature type="binding site" evidence="1">
    <location>
        <position position="82"/>
    </location>
    <ligand>
        <name>Zn(2+)</name>
        <dbReference type="ChEBI" id="CHEBI:29105"/>
    </ligand>
</feature>
<feature type="binding site" evidence="1">
    <location>
        <position position="87"/>
    </location>
    <ligand>
        <name>Zn(2+)</name>
        <dbReference type="ChEBI" id="CHEBI:29105"/>
    </ligand>
</feature>
<feature type="binding site" evidence="1">
    <location>
        <position position="164"/>
    </location>
    <ligand>
        <name>Zn(2+)</name>
        <dbReference type="ChEBI" id="CHEBI:29105"/>
    </ligand>
</feature>
<feature type="binding site" evidence="1">
    <location>
        <position position="169"/>
    </location>
    <ligand>
        <name>Zn(2+)</name>
        <dbReference type="ChEBI" id="CHEBI:29105"/>
    </ligand>
</feature>
<protein>
    <recommendedName>
        <fullName>MOB kinase activator 3C</fullName>
    </recommendedName>
    <alternativeName>
        <fullName>Mob1 homolog 2C</fullName>
    </alternativeName>
    <alternativeName>
        <fullName>Mps one binder kinase activator-like 2C</fullName>
    </alternativeName>
</protein>
<name>MOB3C_HUMAN</name>
<keyword id="KW-0479">Metal-binding</keyword>
<keyword id="KW-1267">Proteomics identification</keyword>
<keyword id="KW-1185">Reference proteome</keyword>
<keyword id="KW-0862">Zinc</keyword>
<accession>Q70IA8</accession>
<accession>D3DQ22</accession>
<accession>Q0VA98</accession>
<accession>Q5TC10</accession>
<accession>Q5TC11</accession>
<accession>Q8NAZ2</accession>
<accession>Q8NF28</accession>
<comment type="function">
    <text evidence="1">May regulate the activity of kinases.</text>
</comment>
<comment type="interaction">
    <interactant intactId="EBI-9679267">
        <id>Q70IA8</id>
    </interactant>
    <interactant intactId="EBI-7247651">
        <id>Q96MX0</id>
        <label>CMTM3</label>
    </interactant>
    <organismsDiffer>false</organismsDiffer>
    <experiments>3</experiments>
</comment>
<comment type="interaction">
    <interactant intactId="EBI-9679267">
        <id>Q70IA8</id>
    </interactant>
    <interactant intactId="EBI-8638992">
        <id>Q9NWS6</id>
        <label>FAM118A</label>
    </interactant>
    <organismsDiffer>false</organismsDiffer>
    <experiments>4</experiments>
</comment>
<comment type="interaction">
    <interactant intactId="EBI-9679267">
        <id>Q70IA8</id>
    </interactant>
    <interactant intactId="EBI-1640423">
        <id>Q9H2S9</id>
        <label>IKZF4</label>
    </interactant>
    <organismsDiffer>false</organismsDiffer>
    <experiments>3</experiments>
</comment>
<comment type="interaction">
    <interactant intactId="EBI-9679267">
        <id>Q70IA8</id>
    </interactant>
    <interactant intactId="EBI-2556193">
        <id>Q63ZY3</id>
        <label>KANK2</label>
    </interactant>
    <organismsDiffer>false</organismsDiffer>
    <experiments>3</experiments>
</comment>
<comment type="interaction">
    <interactant intactId="EBI-9679267">
        <id>Q70IA8</id>
    </interactant>
    <interactant intactId="EBI-10171697">
        <id>Q6A162</id>
        <label>KRT40</label>
    </interactant>
    <organismsDiffer>false</organismsDiffer>
    <experiments>3</experiments>
</comment>
<comment type="interaction">
    <interactant intactId="EBI-9679267">
        <id>Q70IA8</id>
    </interactant>
    <interactant intactId="EBI-4395624">
        <id>Q9Y6X3</id>
        <label>MAU2</label>
    </interactant>
    <organismsDiffer>false</organismsDiffer>
    <experiments>2</experiments>
</comment>
<comment type="interaction">
    <interactant intactId="EBI-9679267">
        <id>Q70IA8</id>
    </interactant>
    <interactant intactId="EBI-742084">
        <id>P49902</id>
        <label>NT5C2</label>
    </interactant>
    <organismsDiffer>false</organismsDiffer>
    <experiments>3</experiments>
</comment>
<comment type="interaction">
    <interactant intactId="EBI-9679267">
        <id>Q70IA8</id>
    </interactant>
    <interactant intactId="EBI-2563309">
        <id>P49585</id>
        <label>PCYT1A</label>
    </interactant>
    <organismsDiffer>false</organismsDiffer>
    <experiments>3</experiments>
</comment>
<comment type="interaction">
    <interactant intactId="EBI-9679267">
        <id>Q70IA8</id>
    </interactant>
    <interactant intactId="EBI-79165">
        <id>Q9NRD5</id>
        <label>PICK1</label>
    </interactant>
    <organismsDiffer>false</organismsDiffer>
    <experiments>3</experiments>
</comment>
<comment type="interaction">
    <interactant intactId="EBI-9679267">
        <id>Q70IA8</id>
    </interactant>
    <interactant intactId="EBI-2860264">
        <id>Q16825</id>
        <label>PTPN21</label>
    </interactant>
    <organismsDiffer>false</organismsDiffer>
    <experiments>3</experiments>
</comment>
<comment type="interaction">
    <interactant intactId="EBI-9679267">
        <id>Q70IA8</id>
    </interactant>
    <interactant intactId="EBI-747107">
        <id>Q8IUQ4</id>
        <label>SIAH1</label>
    </interactant>
    <organismsDiffer>false</organismsDiffer>
    <experiments>3</experiments>
</comment>
<comment type="interaction">
    <interactant intactId="EBI-9679267">
        <id>Q70IA8</id>
    </interactant>
    <interactant intactId="EBI-743494">
        <id>P48775</id>
        <label>TDO2</label>
    </interactant>
    <organismsDiffer>false</organismsDiffer>
    <experiments>3</experiments>
</comment>
<comment type="interaction">
    <interactant intactId="EBI-9679267">
        <id>Q70IA8</id>
    </interactant>
    <interactant intactId="EBI-717422">
        <id>Q12800</id>
        <label>TFCP2</label>
    </interactant>
    <organismsDiffer>false</organismsDiffer>
    <experiments>3</experiments>
</comment>
<comment type="interaction">
    <interactant intactId="EBI-9679267">
        <id>Q70IA8</id>
    </interactant>
    <interactant intactId="EBI-357849">
        <id>Q15025</id>
        <label>TNIP1</label>
    </interactant>
    <organismsDiffer>false</organismsDiffer>
    <experiments>3</experiments>
</comment>
<comment type="interaction">
    <interactant intactId="EBI-9679267">
        <id>Q70IA8</id>
    </interactant>
    <interactant intactId="EBI-10235384">
        <id>Q96DT7</id>
        <label>ZBTB10</label>
    </interactant>
    <organismsDiffer>false</organismsDiffer>
    <experiments>4</experiments>
</comment>
<comment type="similarity">
    <text evidence="2">Belongs to the MOB1/phocein family.</text>
</comment>
<comment type="sequence caution" evidence="2">
    <conflict type="erroneous initiation">
        <sequence resource="EMBL-CDS" id="BAC03434"/>
    </conflict>
    <text>Extended N-terminus.</text>
</comment>
<comment type="sequence caution" evidence="2">
    <conflict type="erroneous initiation">
        <sequence resource="EMBL-CDS" id="BAC03752"/>
    </conflict>
    <text>Truncated N-terminus.</text>
</comment>